<sequence length="537" mass="60230">MEIMSLAIAVFAVIIGLVIGYVSISAKMKSSQEAAELMLLNAEQEATNLRGQAEREADLLVNEAKRESKSLKKEALLEAKEEARKYREEVDAEFKSERQELKQIESRLTERATSLDRKDDNLTSKEQTLEQKEQSISDRAKNLDAREEQLEEVERQKEAELERIGALSQAEARDIILAQTEENLTREIASRIREAEQEVKERSDKMAKDILVQAMQRIAGEYVAESTNSTVHLPDDTMKGRIIGREGRNIRTFESLTGVDVIIDDTPEVVTLSGFDPIRREIARMTMEMLLKDGRIHPARIEELVEKNRQEIDNKIREYGEAAAYEIGAPNLHPDLMKIMGRLQFRTSYGQNVLRHSIEVAKLAGIMASELGENAALARRAGFLHDIGKAIDHEVEGSHVEIGMELARKYKEPPVVVNTIASHHGDVEAESVIAVIVAAADALSAARPGARSESLESYIKRLHDLEEIANGFEGVQTSFALQAGREIRIMVNPGKIKDDKVTILAHKVRKKIENNLDYPGNIKVTVIRELRAVDYAK</sequence>
<proteinExistence type="inferred from homology"/>
<organism>
    <name type="scientific">Streptococcus pneumoniae (strain Hungary19A-6)</name>
    <dbReference type="NCBI Taxonomy" id="487214"/>
    <lineage>
        <taxon>Bacteria</taxon>
        <taxon>Bacillati</taxon>
        <taxon>Bacillota</taxon>
        <taxon>Bacilli</taxon>
        <taxon>Lactobacillales</taxon>
        <taxon>Streptococcaceae</taxon>
        <taxon>Streptococcus</taxon>
    </lineage>
</organism>
<reference key="1">
    <citation type="journal article" date="2010" name="Genome Biol.">
        <title>Structure and dynamics of the pan-genome of Streptococcus pneumoniae and closely related species.</title>
        <authorList>
            <person name="Donati C."/>
            <person name="Hiller N.L."/>
            <person name="Tettelin H."/>
            <person name="Muzzi A."/>
            <person name="Croucher N.J."/>
            <person name="Angiuoli S.V."/>
            <person name="Oggioni M."/>
            <person name="Dunning Hotopp J.C."/>
            <person name="Hu F.Z."/>
            <person name="Riley D.R."/>
            <person name="Covacci A."/>
            <person name="Mitchell T.J."/>
            <person name="Bentley S.D."/>
            <person name="Kilian M."/>
            <person name="Ehrlich G.D."/>
            <person name="Rappuoli R."/>
            <person name="Moxon E.R."/>
            <person name="Masignani V."/>
        </authorList>
    </citation>
    <scope>NUCLEOTIDE SEQUENCE [LARGE SCALE GENOMIC DNA]</scope>
    <source>
        <strain>Hungary19A-6</strain>
    </source>
</reference>
<accession>B1I7K2</accession>
<gene>
    <name evidence="1" type="primary">rny</name>
    <name type="ordered locus">SPH_1848</name>
</gene>
<comment type="function">
    <text evidence="1">Endoribonuclease that initiates mRNA decay.</text>
</comment>
<comment type="subcellular location">
    <subcellularLocation>
        <location evidence="1">Cell membrane</location>
        <topology evidence="1">Single-pass membrane protein</topology>
    </subcellularLocation>
</comment>
<comment type="similarity">
    <text evidence="1">Belongs to the RNase Y family.</text>
</comment>
<evidence type="ECO:0000255" key="1">
    <source>
        <dbReference type="HAMAP-Rule" id="MF_00335"/>
    </source>
</evidence>
<evidence type="ECO:0000255" key="2">
    <source>
        <dbReference type="PROSITE-ProRule" id="PRU01175"/>
    </source>
</evidence>
<evidence type="ECO:0000256" key="3">
    <source>
        <dbReference type="SAM" id="MobiDB-lite"/>
    </source>
</evidence>
<feature type="chain" id="PRO_0000344941" description="Ribonuclease Y">
    <location>
        <begin position="1"/>
        <end position="537"/>
    </location>
</feature>
<feature type="transmembrane region" description="Helical" evidence="1">
    <location>
        <begin position="3"/>
        <end position="23"/>
    </location>
</feature>
<feature type="domain" description="KH" evidence="1">
    <location>
        <begin position="227"/>
        <end position="290"/>
    </location>
</feature>
<feature type="domain" description="HD" evidence="2">
    <location>
        <begin position="353"/>
        <end position="446"/>
    </location>
</feature>
<feature type="region of interest" description="Disordered" evidence="3">
    <location>
        <begin position="114"/>
        <end position="144"/>
    </location>
</feature>
<keyword id="KW-1003">Cell membrane</keyword>
<keyword id="KW-0255">Endonuclease</keyword>
<keyword id="KW-0378">Hydrolase</keyword>
<keyword id="KW-0472">Membrane</keyword>
<keyword id="KW-0540">Nuclease</keyword>
<keyword id="KW-0694">RNA-binding</keyword>
<keyword id="KW-0812">Transmembrane</keyword>
<keyword id="KW-1133">Transmembrane helix</keyword>
<name>RNY_STRPI</name>
<protein>
    <recommendedName>
        <fullName evidence="1">Ribonuclease Y</fullName>
        <shortName evidence="1">RNase Y</shortName>
        <ecNumber evidence="1">3.1.-.-</ecNumber>
    </recommendedName>
</protein>
<dbReference type="EC" id="3.1.-.-" evidence="1"/>
<dbReference type="EMBL" id="CP000936">
    <property type="protein sequence ID" value="ACA37436.1"/>
    <property type="molecule type" value="Genomic_DNA"/>
</dbReference>
<dbReference type="RefSeq" id="WP_000404940.1">
    <property type="nucleotide sequence ID" value="NC_010380.1"/>
</dbReference>
<dbReference type="SMR" id="B1I7K2"/>
<dbReference type="KEGG" id="spv:SPH_1848"/>
<dbReference type="HOGENOM" id="CLU_028328_1_0_9"/>
<dbReference type="Proteomes" id="UP000002163">
    <property type="component" value="Chromosome"/>
</dbReference>
<dbReference type="GO" id="GO:0005886">
    <property type="term" value="C:plasma membrane"/>
    <property type="evidence" value="ECO:0007669"/>
    <property type="project" value="UniProtKB-SubCell"/>
</dbReference>
<dbReference type="GO" id="GO:0003723">
    <property type="term" value="F:RNA binding"/>
    <property type="evidence" value="ECO:0007669"/>
    <property type="project" value="UniProtKB-UniRule"/>
</dbReference>
<dbReference type="GO" id="GO:0004521">
    <property type="term" value="F:RNA endonuclease activity"/>
    <property type="evidence" value="ECO:0007669"/>
    <property type="project" value="UniProtKB-UniRule"/>
</dbReference>
<dbReference type="GO" id="GO:0006402">
    <property type="term" value="P:mRNA catabolic process"/>
    <property type="evidence" value="ECO:0007669"/>
    <property type="project" value="UniProtKB-UniRule"/>
</dbReference>
<dbReference type="CDD" id="cd00077">
    <property type="entry name" value="HDc"/>
    <property type="match status" value="1"/>
</dbReference>
<dbReference type="CDD" id="cd22431">
    <property type="entry name" value="KH-I_RNaseY"/>
    <property type="match status" value="1"/>
</dbReference>
<dbReference type="FunFam" id="1.10.3210.10:FF:000003">
    <property type="entry name" value="Ribonuclease Y"/>
    <property type="match status" value="1"/>
</dbReference>
<dbReference type="Gene3D" id="1.10.3210.10">
    <property type="entry name" value="Hypothetical protein af1432"/>
    <property type="match status" value="1"/>
</dbReference>
<dbReference type="Gene3D" id="3.30.1370.10">
    <property type="entry name" value="K Homology domain, type 1"/>
    <property type="match status" value="1"/>
</dbReference>
<dbReference type="HAMAP" id="MF_00335">
    <property type="entry name" value="RNase_Y"/>
    <property type="match status" value="1"/>
</dbReference>
<dbReference type="InterPro" id="IPR003607">
    <property type="entry name" value="HD/PDEase_dom"/>
</dbReference>
<dbReference type="InterPro" id="IPR006674">
    <property type="entry name" value="HD_domain"/>
</dbReference>
<dbReference type="InterPro" id="IPR006675">
    <property type="entry name" value="HDIG_dom"/>
</dbReference>
<dbReference type="InterPro" id="IPR004087">
    <property type="entry name" value="KH_dom"/>
</dbReference>
<dbReference type="InterPro" id="IPR004088">
    <property type="entry name" value="KH_dom_type_1"/>
</dbReference>
<dbReference type="InterPro" id="IPR036612">
    <property type="entry name" value="KH_dom_type_1_sf"/>
</dbReference>
<dbReference type="InterPro" id="IPR017705">
    <property type="entry name" value="Ribonuclease_Y"/>
</dbReference>
<dbReference type="InterPro" id="IPR022711">
    <property type="entry name" value="RNase_Y_N"/>
</dbReference>
<dbReference type="NCBIfam" id="TIGR00277">
    <property type="entry name" value="HDIG"/>
    <property type="match status" value="1"/>
</dbReference>
<dbReference type="NCBIfam" id="NF000997">
    <property type="entry name" value="PRK00106.1"/>
    <property type="match status" value="1"/>
</dbReference>
<dbReference type="NCBIfam" id="TIGR03319">
    <property type="entry name" value="RNase_Y"/>
    <property type="match status" value="1"/>
</dbReference>
<dbReference type="PANTHER" id="PTHR12826">
    <property type="entry name" value="RIBONUCLEASE Y"/>
    <property type="match status" value="1"/>
</dbReference>
<dbReference type="PANTHER" id="PTHR12826:SF15">
    <property type="entry name" value="RIBONUCLEASE Y"/>
    <property type="match status" value="1"/>
</dbReference>
<dbReference type="Pfam" id="PF01966">
    <property type="entry name" value="HD"/>
    <property type="match status" value="1"/>
</dbReference>
<dbReference type="Pfam" id="PF00013">
    <property type="entry name" value="KH_1"/>
    <property type="match status" value="1"/>
</dbReference>
<dbReference type="Pfam" id="PF12072">
    <property type="entry name" value="RNase_Y_N"/>
    <property type="match status" value="1"/>
</dbReference>
<dbReference type="SMART" id="SM00471">
    <property type="entry name" value="HDc"/>
    <property type="match status" value="1"/>
</dbReference>
<dbReference type="SMART" id="SM00322">
    <property type="entry name" value="KH"/>
    <property type="match status" value="1"/>
</dbReference>
<dbReference type="SUPFAM" id="SSF54791">
    <property type="entry name" value="Eukaryotic type KH-domain (KH-domain type I)"/>
    <property type="match status" value="1"/>
</dbReference>
<dbReference type="SUPFAM" id="SSF109604">
    <property type="entry name" value="HD-domain/PDEase-like"/>
    <property type="match status" value="1"/>
</dbReference>
<dbReference type="PROSITE" id="PS51831">
    <property type="entry name" value="HD"/>
    <property type="match status" value="1"/>
</dbReference>
<dbReference type="PROSITE" id="PS50084">
    <property type="entry name" value="KH_TYPE_1"/>
    <property type="match status" value="1"/>
</dbReference>